<name>LY6E_MOUSE</name>
<gene>
    <name evidence="18" type="primary">Ly6e</name>
    <name type="synonym">Ly67</name>
    <name type="synonym">Sca-2</name>
    <name type="synonym">Tsa-1</name>
</gene>
<protein>
    <recommendedName>
        <fullName evidence="15">Lymphocyte antigen 6E</fullName>
        <shortName>Ly-6E</shortName>
    </recommendedName>
    <alternativeName>
        <fullName>Stem cell antigen 2</fullName>
    </alternativeName>
    <alternativeName>
        <fullName>Thymic shared antigen 1</fullName>
        <shortName>TSA-1</shortName>
    </alternativeName>
</protein>
<organism>
    <name type="scientific">Mus musculus</name>
    <name type="common">Mouse</name>
    <dbReference type="NCBI Taxonomy" id="10090"/>
    <lineage>
        <taxon>Eukaryota</taxon>
        <taxon>Metazoa</taxon>
        <taxon>Chordata</taxon>
        <taxon>Craniata</taxon>
        <taxon>Vertebrata</taxon>
        <taxon>Euteleostomi</taxon>
        <taxon>Mammalia</taxon>
        <taxon>Eutheria</taxon>
        <taxon>Euarchontoglires</taxon>
        <taxon>Glires</taxon>
        <taxon>Rodentia</taxon>
        <taxon>Myomorpha</taxon>
        <taxon>Muroidea</taxon>
        <taxon>Muridae</taxon>
        <taxon>Murinae</taxon>
        <taxon>Mus</taxon>
        <taxon>Mus</taxon>
    </lineage>
</organism>
<comment type="function">
    <text evidence="7 8 9 12 13 14">GPI-anchored cell surface protein that regulates T-lymphocytes proliferation, differentiation, and activation (PubMed:8642345, PubMed:9575182). Regulates the T-cell receptor (TCR) signaling by interacting with component CD3Z/CD247 at the plasma membrane, leading to CD3Z/CD247 phosphorylation modulation (PubMed:9575182). Restricts the entry of murine coronavirus, mouse hepatitis virus, by interfering with spike protein-mediated membrane fusion (PubMed:32704094). Also plays an essential role in placenta formation by acting as the main receptor for syncytin-A (SynA) (PubMed:28679758). Therefore, participates in the normal fusion of syncytiotrophoblast layer I (SynT-I) and in the proper morphogenesis of both fetal and maternal vasculatures within the placenta (PubMed:29500366). May also act as a modulator of nicotinic acetylcholine receptors (nAChRs) activity. In vitro inhibits alpha-3:beta-4-containing nAChRs maximum response (PubMed:26276394).</text>
</comment>
<comment type="subunit">
    <text evidence="7 14">Interacts with CHRNA4 (PubMed:26276394). Interacts with CD3Z/CD247 (PubMed:9575182).</text>
</comment>
<comment type="subcellular location">
    <subcellularLocation>
        <location evidence="14">Cell membrane</location>
        <topology evidence="15">Lipid-anchor</topology>
        <topology evidence="15">GPI-anchor</topology>
    </subcellularLocation>
</comment>
<comment type="tissue specificity">
    <text evidence="6 8 10">Ubiquitously expressed in mouse adult tissues with maximal expression in the lung and the salivary gland. Expression is strikingly lower in the fetal tissues except for the placenta (PubMed:28679758). Present in thymus where its expression is observed in immature thymocytes and thymic stromal cells (PubMed:1531995). Also found on functionally active T-cells as well as B-cells and thymic dendritic cells (PubMed:2987354).</text>
</comment>
<comment type="induction">
    <text evidence="11">By interferon gamma/IFN-gamma on resting T-cells.</text>
</comment>
<comment type="disruption phenotype">
    <text evidence="5 9 12">Knockout mice show embryonic lethality at 14.5 dpc (PubMed:11784869). Lethality is due to a critical role in the trophoblast stem cells which form the outer layer of fetal part of the placenta. Alters syncytiotropoblast-I layer I (SynT-I) fusion while SynT-II cell fusion does not seem to be affected, indicating a cell autonomous role in SynT-I fusion (PubMed:29500366). Konckout mice specific to immune cells are highly susceptible to the murine coronavirus, mouse hepatitis virus (PubMed:32704094).</text>
</comment>
<comment type="sequence caution" evidence="15">
    <conflict type="erroneous initiation">
        <sequence resource="EMBL-CDS" id="AAB17698"/>
    </conflict>
    <text>Truncated N-terminus.</text>
</comment>
<evidence type="ECO:0000250" key="1"/>
<evidence type="ECO:0000250" key="2">
    <source>
        <dbReference type="UniProtKB" id="P0DP57"/>
    </source>
</evidence>
<evidence type="ECO:0000250" key="3">
    <source>
        <dbReference type="UniProtKB" id="P0DP58"/>
    </source>
</evidence>
<evidence type="ECO:0000255" key="4"/>
<evidence type="ECO:0000269" key="5">
    <source>
    </source>
</evidence>
<evidence type="ECO:0000269" key="6">
    <source>
    </source>
</evidence>
<evidence type="ECO:0000269" key="7">
    <source>
    </source>
</evidence>
<evidence type="ECO:0000269" key="8">
    <source>
    </source>
</evidence>
<evidence type="ECO:0000269" key="9">
    <source>
    </source>
</evidence>
<evidence type="ECO:0000269" key="10">
    <source>
    </source>
</evidence>
<evidence type="ECO:0000269" key="11">
    <source>
    </source>
</evidence>
<evidence type="ECO:0000269" key="12">
    <source>
    </source>
</evidence>
<evidence type="ECO:0000269" key="13">
    <source>
    </source>
</evidence>
<evidence type="ECO:0000269" key="14">
    <source>
    </source>
</evidence>
<evidence type="ECO:0000305" key="15"/>
<evidence type="ECO:0000312" key="16">
    <source>
        <dbReference type="EMBL" id="AAH05684.1"/>
    </source>
</evidence>
<evidence type="ECO:0000312" key="17">
    <source>
        <dbReference type="EMBL" id="CAJ18428.1"/>
    </source>
</evidence>
<evidence type="ECO:0000312" key="18">
    <source>
        <dbReference type="MGI" id="MGI:106651"/>
    </source>
</evidence>
<evidence type="ECO:0000312" key="19">
    <source>
        <dbReference type="Proteomes" id="UP000000589"/>
    </source>
</evidence>
<proteinExistence type="evidence at protein level"/>
<reference key="1">
    <citation type="journal article" date="1993" name="J. Immunol.">
        <title>Isolation of a cDNA encoding thymic shared antigen-1. A new member of the Ly6 family with a possible role in T cell development.</title>
        <authorList>
            <person name="Macneil I."/>
            <person name="Kennedy J."/>
            <person name="Godfrey D.I."/>
            <person name="Jenkins N.A."/>
            <person name="Masciantonio M."/>
            <person name="Mineo C."/>
            <person name="Gilbert D.J."/>
            <person name="Copeland N.G."/>
            <person name="Boyd R.L."/>
            <person name="Zlotnik A."/>
        </authorList>
    </citation>
    <scope>NUCLEOTIDE SEQUENCE [MRNA]</scope>
    <scope>FUNCTION</scope>
</reference>
<reference key="2">
    <citation type="journal article" date="1994" name="Proc. Natl. Acad. Sci. U.S.A.">
        <title>Mouse stem cell antigen Sca-2 is a member of the Ly-6 family of cell surface proteins.</title>
        <authorList>
            <person name="Classon B.J."/>
            <person name="Coverdale L."/>
        </authorList>
    </citation>
    <scope>NUCLEOTIDE SEQUENCE [MRNA]</scope>
    <source>
        <strain>C57BL/6J</strain>
        <tissue>Thymus</tissue>
    </source>
</reference>
<reference key="3">
    <citation type="journal article" date="1996" name="Immunogenetics">
        <title>Genomic organization and expression of mouse thymic shared antigen-1 (TSA-1): evidence for a processed pseudogene.</title>
        <authorList>
            <person name="Classon B.J."/>
            <person name="Coverdale L."/>
        </authorList>
    </citation>
    <scope>NUCLEOTIDE SEQUENCE [GENOMIC DNA]</scope>
    <source>
        <strain>129/SvJ</strain>
    </source>
</reference>
<reference evidence="19" key="4">
    <citation type="journal article" date="2009" name="PLoS Biol.">
        <title>Lineage-specific biology revealed by a finished genome assembly of the mouse.</title>
        <authorList>
            <person name="Church D.M."/>
            <person name="Goodstadt L."/>
            <person name="Hillier L.W."/>
            <person name="Zody M.C."/>
            <person name="Goldstein S."/>
            <person name="She X."/>
            <person name="Bult C.J."/>
            <person name="Agarwala R."/>
            <person name="Cherry J.L."/>
            <person name="DiCuccio M."/>
            <person name="Hlavina W."/>
            <person name="Kapustin Y."/>
            <person name="Meric P."/>
            <person name="Maglott D."/>
            <person name="Birtle Z."/>
            <person name="Marques A.C."/>
            <person name="Graves T."/>
            <person name="Zhou S."/>
            <person name="Teague B."/>
            <person name="Potamousis K."/>
            <person name="Churas C."/>
            <person name="Place M."/>
            <person name="Herschleb J."/>
            <person name="Runnheim R."/>
            <person name="Forrest D."/>
            <person name="Amos-Landgraf J."/>
            <person name="Schwartz D.C."/>
            <person name="Cheng Z."/>
            <person name="Lindblad-Toh K."/>
            <person name="Eichler E.E."/>
            <person name="Ponting C.P."/>
        </authorList>
    </citation>
    <scope>NUCLEOTIDE SEQUENCE [LARGE SCALE GENOMIC DNA]</scope>
    <source>
        <strain evidence="19">C57BL/6J</strain>
    </source>
</reference>
<reference evidence="17" key="5">
    <citation type="submission" date="2005-07" db="EMBL/GenBank/DDBJ databases">
        <title>Cloning of mouse full open reading frames in Gateway(R) system entry vector (pDONR201).</title>
        <authorList>
            <person name="Ebert L."/>
            <person name="Muenstermann E."/>
            <person name="Schatten R."/>
            <person name="Henze S."/>
            <person name="Bohn E."/>
            <person name="Mollenhauer J."/>
            <person name="Wiemann S."/>
            <person name="Schick M."/>
            <person name="Korn B."/>
        </authorList>
    </citation>
    <scope>NUCLEOTIDE SEQUENCE [LARGE SCALE MRNA]</scope>
</reference>
<reference evidence="16" key="6">
    <citation type="journal article" date="2004" name="Genome Res.">
        <title>The status, quality, and expansion of the NIH full-length cDNA project: the Mammalian Gene Collection (MGC).</title>
        <authorList>
            <consortium name="The MGC Project Team"/>
        </authorList>
    </citation>
    <scope>NUCLEOTIDE SEQUENCE [LARGE SCALE MRNA]</scope>
</reference>
<reference key="7">
    <citation type="journal article" date="1985" name="J. Immunol.">
        <title>A monoclonal antibody that recognizes an Ly-6-linked antigen inhibits the generation of functionally active T cell subsets.</title>
        <authorList>
            <person name="Flood P.M."/>
            <person name="Murphy D.B."/>
            <person name="Horowitz M."/>
            <person name="LeClair K.P."/>
            <person name="Smith F.R."/>
            <person name="Stockert E."/>
            <person name="Palladino M.A. Jr."/>
            <person name="DeLeo A.B."/>
        </authorList>
    </citation>
    <scope>TISSUE SPECIFICITY</scope>
</reference>
<reference key="8">
    <citation type="journal article" date="1987" name="Eur. J. Immunol.">
        <title>Selective up-regulation by interferon-gamma of surface molecules of the Ly-6 complex in resting T cells: the Ly-6A/E and TAP antigens are preferentially enhanced.</title>
        <authorList>
            <person name="Dumont F.J."/>
            <person name="Dijkmans R."/>
            <person name="Palfree R.G."/>
            <person name="Boltz R.D."/>
            <person name="Coker L."/>
        </authorList>
    </citation>
    <scope>INDUCTION BY INTERFERON GAMMA</scope>
</reference>
<reference key="9">
    <citation type="journal article" date="1992" name="J. Immunol.">
        <title>Thymic shared antigen-1. A novel thymocyte marker discriminating immature from mature thymocyte subsets.</title>
        <authorList>
            <person name="Godfrey D.I."/>
            <person name="Masciantonio M."/>
            <person name="Tucek C.L."/>
            <person name="Malin M.A."/>
            <person name="Boyd R.L."/>
            <person name="Hugo P."/>
        </authorList>
    </citation>
    <scope>TISSUE SPECIFICITY</scope>
</reference>
<reference key="10">
    <citation type="journal article" date="1995" name="J. Immunol.">
        <title>Modulation of TCR-mediated signaling pathway by thymic shared antigen-1 (TSA-1)/stem cell antigen-2 (Sca-2).</title>
        <authorList>
            <person name="Saitoh S."/>
            <person name="Kosugi A."/>
            <person name="Noda S."/>
            <person name="Yamamoto N."/>
            <person name="Ogata M."/>
            <person name="Minami Y."/>
            <person name="Miyake K."/>
            <person name="Hamaoka T."/>
        </authorList>
    </citation>
    <scope>FUNCTION</scope>
</reference>
<reference key="11">
    <citation type="journal article" date="1996" name="J. Exp. Med.">
        <title>Protection from anti-TCR/CD3-induced apoptosis in immature thymocytes by a signal through thymic shared antigen-1/stem cell antigen-2.</title>
        <authorList>
            <person name="Noda S."/>
            <person name="Kosugi A."/>
            <person name="Saitoh S."/>
            <person name="Narumiya S."/>
            <person name="Hamaoka T."/>
        </authorList>
    </citation>
    <scope>FUNCTION IN T-CELL DEVELOPMENT</scope>
</reference>
<reference key="12">
    <citation type="journal article" date="1998" name="J. Biol. Chem.">
        <title>Physical and functional association between thymic shared antigen-1/stem cell antigen-2 and the T cell receptor complex.</title>
        <authorList>
            <person name="Kosugi A."/>
            <person name="Saitoh S."/>
            <person name="Noda S."/>
            <person name="Miyake K."/>
            <person name="Yamashita Y."/>
            <person name="Kimoto M."/>
            <person name="Ogata M."/>
            <person name="Hamaoka T."/>
        </authorList>
    </citation>
    <scope>FUNCTION</scope>
    <scope>SUBCELLULAR LOCATION</scope>
    <scope>INTERACTION WITH CD247</scope>
</reference>
<reference key="13">
    <citation type="journal article" date="2002" name="Mol. Cell. Biol.">
        <title>Essential role for the lymphostromal plasma membrane Ly-6 superfamily molecule thymic shared antigen 1 in development of the embryonic adrenal gland.</title>
        <authorList>
            <person name="Zammit D.J."/>
            <person name="Berzins S.P."/>
            <person name="Gill J.W."/>
            <person name="Randle-Barrett E.S."/>
            <person name="Barnett L."/>
            <person name="Koentgen F."/>
            <person name="Lambert G.W."/>
            <person name="Harvey R.P."/>
            <person name="Boyd R.L."/>
            <person name="Classon B.J."/>
        </authorList>
    </citation>
    <scope>DISRUPTION PHENOTYPE</scope>
</reference>
<reference key="14">
    <citation type="journal article" date="2010" name="Cell">
        <title>A tissue-specific atlas of mouse protein phosphorylation and expression.</title>
        <authorList>
            <person name="Huttlin E.L."/>
            <person name="Jedrychowski M.P."/>
            <person name="Elias J.E."/>
            <person name="Goswami T."/>
            <person name="Rad R."/>
            <person name="Beausoleil S.A."/>
            <person name="Villen J."/>
            <person name="Haas W."/>
            <person name="Sowa M.E."/>
            <person name="Gygi S.P."/>
        </authorList>
    </citation>
    <scope>IDENTIFICATION BY MASS SPECTROMETRY [LARGE SCALE ANALYSIS]</scope>
    <source>
        <tissue>Brain</tissue>
        <tissue>Kidney</tissue>
        <tissue>Spleen</tissue>
    </source>
</reference>
<reference key="15">
    <citation type="journal article" date="2015" name="J. Biol. Chem.">
        <title>Mechanisms of inhibition and potentiation of alpha4beta2 nicotinic acetylcholine receptors by members of the Ly6 protein family.</title>
        <authorList>
            <person name="Wu M."/>
            <person name="Puddifoot C.A."/>
            <person name="Taylor P."/>
            <person name="Joiner W.J."/>
        </authorList>
    </citation>
    <scope>FUNCTION</scope>
    <scope>INTERACTION WITH CHRNA4</scope>
</reference>
<reference key="16">
    <citation type="journal article" date="2017" name="J. Virol.">
        <title>A Cell Fusion-Based Screening Method Identifies Glycosylphosphatidylinositol-Anchored Protein Ly6e as the Receptor for Mouse Endogenous Retroviral Envelope Syncytin-A.</title>
        <authorList>
            <person name="Bacquin A."/>
            <person name="Bireau C."/>
            <person name="Tanguy M."/>
            <person name="Romanet C."/>
            <person name="Vernochet C."/>
            <person name="Dupressoir A."/>
            <person name="Heidmann T."/>
        </authorList>
    </citation>
    <scope>FUNCTION</scope>
    <scope>TISSUE SPECIFICITY</scope>
</reference>
<reference key="17">
    <citation type="journal article" date="2018" name="Sci. Rep.">
        <title>Deletion of the Syncytin A receptor Ly6e impairs syncytiotrophoblast fusion and placental morphogenesis causing embryonic lethality in mice.</title>
        <authorList>
            <person name="Langford M.B."/>
            <person name="Outhwaite J.E."/>
            <person name="Hughes M."/>
            <person name="Natale D.R.C."/>
            <person name="Simmons D.G."/>
        </authorList>
    </citation>
    <scope>FUNCTION</scope>
    <scope>DISRUPTION PHENOTYPE</scope>
</reference>
<reference key="18">
    <citation type="journal article" date="2020" name="Nat. Microbiol.">
        <title>LY6E impairs coronavirus fusion and confers immune control of viral disease.</title>
        <authorList>
            <person name="Pfaender S."/>
            <person name="Mar K.B."/>
            <person name="Michailidis E."/>
            <person name="Kratzel A."/>
            <person name="Boys I.N."/>
            <person name="V'kovski P."/>
            <person name="Fan W."/>
            <person name="Kelly J.N."/>
            <person name="Hirt D."/>
            <person name="Ebert N."/>
            <person name="Stalder H."/>
            <person name="Kleine-Weber H."/>
            <person name="Hoffmann M."/>
            <person name="Hoffmann H.H."/>
            <person name="Saeed M."/>
            <person name="Dijkman R."/>
            <person name="Steinmann E."/>
            <person name="Wight-Carter M."/>
            <person name="McDougal M.B."/>
            <person name="Hanners N.W."/>
            <person name="Poehlmann S."/>
            <person name="Gallagher T."/>
            <person name="Todt D."/>
            <person name="Zimmer G."/>
            <person name="Rice C.M."/>
            <person name="Schoggins J.W."/>
            <person name="Thiel V."/>
        </authorList>
    </citation>
    <scope>FUNCTION</scope>
    <scope>DISRUPTION PHENOTYPE</scope>
</reference>
<accession>Q64253</accession>
<accession>Q61128</accession>
<accession>Q99JA5</accession>
<keyword id="KW-1003">Cell membrane</keyword>
<keyword id="KW-1015">Disulfide bond</keyword>
<keyword id="KW-0325">Glycoprotein</keyword>
<keyword id="KW-0336">GPI-anchor</keyword>
<keyword id="KW-0449">Lipoprotein</keyword>
<keyword id="KW-0472">Membrane</keyword>
<keyword id="KW-1185">Reference proteome</keyword>
<keyword id="KW-0732">Signal</keyword>
<feature type="signal peptide" evidence="4">
    <location>
        <begin position="1"/>
        <end position="26"/>
    </location>
</feature>
<feature type="chain" id="PRO_0000036140" description="Lymphocyte antigen 6E">
    <location>
        <begin position="27"/>
        <end position="108"/>
    </location>
</feature>
<feature type="propeptide" id="PRO_0000036141" description="Removed in mature form" evidence="1">
    <location>
        <begin position="109"/>
        <end position="136"/>
    </location>
</feature>
<feature type="domain" description="UPAR/Ly6" evidence="4">
    <location>
        <begin position="27"/>
        <end position="118"/>
    </location>
</feature>
<feature type="lipid moiety-binding region" description="GPI-anchor amidated alanine" evidence="4">
    <location>
        <position position="108"/>
    </location>
</feature>
<feature type="glycosylation site" description="N-linked (GlcNAc...) asparagine" evidence="4">
    <location>
        <position position="105"/>
    </location>
</feature>
<feature type="disulfide bond" evidence="2 3">
    <location>
        <begin position="29"/>
        <end position="54"/>
    </location>
</feature>
<feature type="disulfide bond" evidence="2 3">
    <location>
        <begin position="32"/>
        <end position="41"/>
    </location>
</feature>
<feature type="disulfide bond" evidence="2 3">
    <location>
        <begin position="47"/>
        <end position="76"/>
    </location>
</feature>
<feature type="disulfide bond" evidence="2 3">
    <location>
        <begin position="80"/>
        <end position="98"/>
    </location>
</feature>
<feature type="disulfide bond" evidence="2 3">
    <location>
        <begin position="99"/>
        <end position="104"/>
    </location>
</feature>
<sequence>MSATSNMRVFLPVLLAALLGMEQVHSLMCFSCTDQKNNINCLWPVSCQEKDHYCITLSAAAGFGNVNLGYTLNKGCSPICPSENVNLNLGVASVNSYCCQSSFCNFSAAGLGLRASIPLLGLGLLLSLLALLQLSP</sequence>
<dbReference type="EMBL" id="U09192">
    <property type="protein sequence ID" value="AAB03366.1"/>
    <property type="molecule type" value="mRNA"/>
</dbReference>
<dbReference type="EMBL" id="U04268">
    <property type="protein sequence ID" value="AAA19121.1"/>
    <property type="molecule type" value="mRNA"/>
</dbReference>
<dbReference type="EMBL" id="U47737">
    <property type="protein sequence ID" value="AAB17698.1"/>
    <property type="status" value="ALT_INIT"/>
    <property type="molecule type" value="Genomic_DNA"/>
</dbReference>
<dbReference type="EMBL" id="AC124637">
    <property type="status" value="NOT_ANNOTATED_CDS"/>
    <property type="molecule type" value="Genomic_DNA"/>
</dbReference>
<dbReference type="EMBL" id="CT010244">
    <property type="protein sequence ID" value="CAJ18452.1"/>
    <property type="molecule type" value="mRNA"/>
</dbReference>
<dbReference type="EMBL" id="CT010220">
    <property type="protein sequence ID" value="CAJ18428.1"/>
    <property type="molecule type" value="mRNA"/>
</dbReference>
<dbReference type="EMBL" id="BC002116">
    <property type="protein sequence ID" value="AAH02116.1"/>
    <property type="molecule type" value="mRNA"/>
</dbReference>
<dbReference type="EMBL" id="BC003926">
    <property type="protein sequence ID" value="AAH03926.1"/>
    <property type="molecule type" value="mRNA"/>
</dbReference>
<dbReference type="EMBL" id="BC005684">
    <property type="protein sequence ID" value="AAH05684.1"/>
    <property type="molecule type" value="mRNA"/>
</dbReference>
<dbReference type="EMBL" id="BC040691">
    <property type="protein sequence ID" value="AAH40691.1"/>
    <property type="molecule type" value="mRNA"/>
</dbReference>
<dbReference type="EMBL" id="BC019113">
    <property type="protein sequence ID" value="AAH19113.1"/>
    <property type="molecule type" value="mRNA"/>
</dbReference>
<dbReference type="EMBL" id="BC080711">
    <property type="protein sequence ID" value="AAH80711.1"/>
    <property type="molecule type" value="mRNA"/>
</dbReference>
<dbReference type="EMBL" id="BC053523">
    <property type="protein sequence ID" value="AAH53523.1"/>
    <property type="molecule type" value="mRNA"/>
</dbReference>
<dbReference type="PIR" id="I49013">
    <property type="entry name" value="I49013"/>
</dbReference>
<dbReference type="RefSeq" id="NP_001157508.1">
    <property type="nucleotide sequence ID" value="NM_001164036.1"/>
</dbReference>
<dbReference type="RefSeq" id="NP_001157509.1">
    <property type="nucleotide sequence ID" value="NM_001164037.1"/>
</dbReference>
<dbReference type="RefSeq" id="NP_001157510.1">
    <property type="nucleotide sequence ID" value="NM_001164038.1"/>
</dbReference>
<dbReference type="RefSeq" id="NP_001157511.1">
    <property type="nucleotide sequence ID" value="NM_001164039.1"/>
</dbReference>
<dbReference type="RefSeq" id="NP_001157512.1">
    <property type="nucleotide sequence ID" value="NM_001164040.1"/>
</dbReference>
<dbReference type="RefSeq" id="NP_032555.1">
    <property type="nucleotide sequence ID" value="NM_008529.3"/>
</dbReference>
<dbReference type="RefSeq" id="XP_036015094.1">
    <property type="nucleotide sequence ID" value="XM_036159201.1"/>
</dbReference>
<dbReference type="SMR" id="Q64253"/>
<dbReference type="BioGRID" id="201242">
    <property type="interactions" value="1"/>
</dbReference>
<dbReference type="FunCoup" id="Q64253">
    <property type="interactions" value="7"/>
</dbReference>
<dbReference type="IntAct" id="Q64253">
    <property type="interactions" value="1"/>
</dbReference>
<dbReference type="STRING" id="10090.ENSMUSP00000056703"/>
<dbReference type="GlyCosmos" id="Q64253">
    <property type="glycosylation" value="1 site, No reported glycans"/>
</dbReference>
<dbReference type="GlyGen" id="Q64253">
    <property type="glycosylation" value="1 site"/>
</dbReference>
<dbReference type="PhosphoSitePlus" id="Q64253"/>
<dbReference type="SwissPalm" id="Q64253"/>
<dbReference type="jPOST" id="Q64253"/>
<dbReference type="PaxDb" id="10090-ENSMUSP00000056703"/>
<dbReference type="PeptideAtlas" id="Q64253"/>
<dbReference type="ProteomicsDB" id="291973"/>
<dbReference type="ProteomicsDB" id="330273"/>
<dbReference type="ABCD" id="Q64253">
    <property type="antibodies" value="3 sequenced antibodies"/>
</dbReference>
<dbReference type="DNASU" id="17069"/>
<dbReference type="GeneID" id="17069"/>
<dbReference type="KEGG" id="mmu:17069"/>
<dbReference type="UCSC" id="uc007wgh.2">
    <property type="organism name" value="mouse"/>
</dbReference>
<dbReference type="AGR" id="MGI:106651"/>
<dbReference type="CTD" id="4061"/>
<dbReference type="MGI" id="MGI:106651">
    <property type="gene designation" value="Ly6e"/>
</dbReference>
<dbReference type="VEuPathDB" id="HostDB:ENSMUSG00000022587"/>
<dbReference type="eggNOG" id="ENOG502SRPS">
    <property type="taxonomic scope" value="Eukaryota"/>
</dbReference>
<dbReference type="HOGENOM" id="CLU_141358_0_0_1"/>
<dbReference type="InParanoid" id="Q64253"/>
<dbReference type="OMA" id="CMTTVAS"/>
<dbReference type="PhylomeDB" id="Q64253"/>
<dbReference type="TreeFam" id="TF336080"/>
<dbReference type="Reactome" id="R-MMU-163125">
    <property type="pathway name" value="Post-translational modification: synthesis of GPI-anchored proteins"/>
</dbReference>
<dbReference type="BioGRID-ORCS" id="17069">
    <property type="hits" value="2 hits in 80 CRISPR screens"/>
</dbReference>
<dbReference type="ChiTaRS" id="Ly6e">
    <property type="organism name" value="mouse"/>
</dbReference>
<dbReference type="PRO" id="PR:Q64253"/>
<dbReference type="Proteomes" id="UP000000589">
    <property type="component" value="Chromosome 15"/>
</dbReference>
<dbReference type="RNAct" id="Q64253">
    <property type="molecule type" value="protein"/>
</dbReference>
<dbReference type="Bgee" id="ENSMUSG00000022587">
    <property type="expression patterns" value="Expressed in thoracic mammary gland and 168 other cell types or tissues"/>
</dbReference>
<dbReference type="ExpressionAtlas" id="Q64253">
    <property type="expression patterns" value="baseline and differential"/>
</dbReference>
<dbReference type="GO" id="GO:0005886">
    <property type="term" value="C:plasma membrane"/>
    <property type="evidence" value="ECO:0007669"/>
    <property type="project" value="UniProtKB-SubCell"/>
</dbReference>
<dbReference type="GO" id="GO:0098552">
    <property type="term" value="C:side of membrane"/>
    <property type="evidence" value="ECO:0007669"/>
    <property type="project" value="UniProtKB-KW"/>
</dbReference>
<dbReference type="GO" id="GO:0045202">
    <property type="term" value="C:synapse"/>
    <property type="evidence" value="ECO:0007669"/>
    <property type="project" value="GOC"/>
</dbReference>
<dbReference type="GO" id="GO:0033130">
    <property type="term" value="F:acetylcholine receptor binding"/>
    <property type="evidence" value="ECO:0000314"/>
    <property type="project" value="MGI"/>
</dbReference>
<dbReference type="GO" id="GO:0030550">
    <property type="term" value="F:acetylcholine receptor inhibitor activity"/>
    <property type="evidence" value="ECO:0000314"/>
    <property type="project" value="MGI"/>
</dbReference>
<dbReference type="GO" id="GO:0095500">
    <property type="term" value="P:acetylcholine receptor signaling pathway"/>
    <property type="evidence" value="ECO:0000314"/>
    <property type="project" value="MGI"/>
</dbReference>
<dbReference type="GO" id="GO:0030325">
    <property type="term" value="P:adrenal gland development"/>
    <property type="evidence" value="ECO:0000315"/>
    <property type="project" value="MGI"/>
</dbReference>
<dbReference type="GO" id="GO:0048242">
    <property type="term" value="P:epinephrine secretion"/>
    <property type="evidence" value="ECO:0000315"/>
    <property type="project" value="MGI"/>
</dbReference>
<dbReference type="GO" id="GO:0046597">
    <property type="term" value="P:host-mediated suppression of symbiont invasion"/>
    <property type="evidence" value="ECO:0000315"/>
    <property type="project" value="UniProtKB"/>
</dbReference>
<dbReference type="GO" id="GO:0001701">
    <property type="term" value="P:in utero embryonic development"/>
    <property type="evidence" value="ECO:0000315"/>
    <property type="project" value="MGI"/>
</dbReference>
<dbReference type="GO" id="GO:0042415">
    <property type="term" value="P:norepinephrine metabolic process"/>
    <property type="evidence" value="ECO:0000315"/>
    <property type="project" value="MGI"/>
</dbReference>
<dbReference type="GO" id="GO:0035265">
    <property type="term" value="P:organ growth"/>
    <property type="evidence" value="ECO:0000315"/>
    <property type="project" value="MGI"/>
</dbReference>
<dbReference type="GO" id="GO:0055010">
    <property type="term" value="P:ventricular cardiac muscle tissue morphogenesis"/>
    <property type="evidence" value="ECO:0000315"/>
    <property type="project" value="MGI"/>
</dbReference>
<dbReference type="CDD" id="cd23543">
    <property type="entry name" value="TFP_LU_ECD_Ly6E"/>
    <property type="match status" value="1"/>
</dbReference>
<dbReference type="FunFam" id="2.10.60.10:FF:000003">
    <property type="entry name" value="lymphocyte antigen 6E isoform X1"/>
    <property type="match status" value="1"/>
</dbReference>
<dbReference type="Gene3D" id="2.10.60.10">
    <property type="entry name" value="CD59"/>
    <property type="match status" value="1"/>
</dbReference>
<dbReference type="InterPro" id="IPR051110">
    <property type="entry name" value="Ly-6/neurotoxin-like_GPI-ap"/>
</dbReference>
<dbReference type="InterPro" id="IPR016054">
    <property type="entry name" value="LY6_UPA_recep-like"/>
</dbReference>
<dbReference type="InterPro" id="IPR045860">
    <property type="entry name" value="Snake_toxin-like_sf"/>
</dbReference>
<dbReference type="InterPro" id="IPR035076">
    <property type="entry name" value="Toxin/TOLIP"/>
</dbReference>
<dbReference type="PANTHER" id="PTHR16983:SF13">
    <property type="entry name" value="LYMPHOCYTE ANTIGEN 6E"/>
    <property type="match status" value="1"/>
</dbReference>
<dbReference type="PANTHER" id="PTHR16983">
    <property type="entry name" value="UPAR/LY6 DOMAIN-CONTAINING PROTEIN"/>
    <property type="match status" value="1"/>
</dbReference>
<dbReference type="Pfam" id="PF00087">
    <property type="entry name" value="Toxin_TOLIP"/>
    <property type="match status" value="1"/>
</dbReference>
<dbReference type="SMART" id="SM00134">
    <property type="entry name" value="LU"/>
    <property type="match status" value="1"/>
</dbReference>
<dbReference type="SUPFAM" id="SSF57302">
    <property type="entry name" value="Snake toxin-like"/>
    <property type="match status" value="1"/>
</dbReference>